<comment type="function">
    <text evidence="1">This protein binds to 23S rRNA in the presence of protein L20.</text>
</comment>
<comment type="subunit">
    <text evidence="1">Part of the 50S ribosomal subunit. Contacts protein L20.</text>
</comment>
<comment type="similarity">
    <text evidence="1">Belongs to the bacterial ribosomal protein bL21 family.</text>
</comment>
<name>RL21_RALPJ</name>
<protein>
    <recommendedName>
        <fullName evidence="1">Large ribosomal subunit protein bL21</fullName>
    </recommendedName>
    <alternativeName>
        <fullName evidence="2">50S ribosomal protein L21</fullName>
    </alternativeName>
</protein>
<feature type="chain" id="PRO_1000143838" description="Large ribosomal subunit protein bL21">
    <location>
        <begin position="1"/>
        <end position="103"/>
    </location>
</feature>
<gene>
    <name evidence="1" type="primary">rplU</name>
    <name type="ordered locus">Rpic_3067</name>
</gene>
<proteinExistence type="inferred from homology"/>
<accession>B2UCV5</accession>
<organism>
    <name type="scientific">Ralstonia pickettii (strain 12J)</name>
    <dbReference type="NCBI Taxonomy" id="402626"/>
    <lineage>
        <taxon>Bacteria</taxon>
        <taxon>Pseudomonadati</taxon>
        <taxon>Pseudomonadota</taxon>
        <taxon>Betaproteobacteria</taxon>
        <taxon>Burkholderiales</taxon>
        <taxon>Burkholderiaceae</taxon>
        <taxon>Ralstonia</taxon>
    </lineage>
</organism>
<evidence type="ECO:0000255" key="1">
    <source>
        <dbReference type="HAMAP-Rule" id="MF_01363"/>
    </source>
</evidence>
<evidence type="ECO:0000305" key="2"/>
<keyword id="KW-0687">Ribonucleoprotein</keyword>
<keyword id="KW-0689">Ribosomal protein</keyword>
<keyword id="KW-0694">RNA-binding</keyword>
<keyword id="KW-0699">rRNA-binding</keyword>
<dbReference type="EMBL" id="CP001068">
    <property type="protein sequence ID" value="ACD28190.1"/>
    <property type="molecule type" value="Genomic_DNA"/>
</dbReference>
<dbReference type="SMR" id="B2UCV5"/>
<dbReference type="STRING" id="402626.Rpic_3067"/>
<dbReference type="KEGG" id="rpi:Rpic_3067"/>
<dbReference type="eggNOG" id="COG0261">
    <property type="taxonomic scope" value="Bacteria"/>
</dbReference>
<dbReference type="HOGENOM" id="CLU_061463_3_2_4"/>
<dbReference type="GO" id="GO:0005737">
    <property type="term" value="C:cytoplasm"/>
    <property type="evidence" value="ECO:0007669"/>
    <property type="project" value="UniProtKB-ARBA"/>
</dbReference>
<dbReference type="GO" id="GO:1990904">
    <property type="term" value="C:ribonucleoprotein complex"/>
    <property type="evidence" value="ECO:0007669"/>
    <property type="project" value="UniProtKB-KW"/>
</dbReference>
<dbReference type="GO" id="GO:0005840">
    <property type="term" value="C:ribosome"/>
    <property type="evidence" value="ECO:0007669"/>
    <property type="project" value="UniProtKB-KW"/>
</dbReference>
<dbReference type="GO" id="GO:0019843">
    <property type="term" value="F:rRNA binding"/>
    <property type="evidence" value="ECO:0007669"/>
    <property type="project" value="UniProtKB-UniRule"/>
</dbReference>
<dbReference type="GO" id="GO:0003735">
    <property type="term" value="F:structural constituent of ribosome"/>
    <property type="evidence" value="ECO:0007669"/>
    <property type="project" value="InterPro"/>
</dbReference>
<dbReference type="GO" id="GO:0006412">
    <property type="term" value="P:translation"/>
    <property type="evidence" value="ECO:0007669"/>
    <property type="project" value="UniProtKB-UniRule"/>
</dbReference>
<dbReference type="HAMAP" id="MF_01363">
    <property type="entry name" value="Ribosomal_bL21"/>
    <property type="match status" value="1"/>
</dbReference>
<dbReference type="InterPro" id="IPR028909">
    <property type="entry name" value="bL21-like"/>
</dbReference>
<dbReference type="InterPro" id="IPR036164">
    <property type="entry name" value="bL21-like_sf"/>
</dbReference>
<dbReference type="InterPro" id="IPR001787">
    <property type="entry name" value="Ribosomal_bL21"/>
</dbReference>
<dbReference type="InterPro" id="IPR018258">
    <property type="entry name" value="Ribosomal_bL21_CS"/>
</dbReference>
<dbReference type="NCBIfam" id="TIGR00061">
    <property type="entry name" value="L21"/>
    <property type="match status" value="1"/>
</dbReference>
<dbReference type="PANTHER" id="PTHR21349">
    <property type="entry name" value="50S RIBOSOMAL PROTEIN L21"/>
    <property type="match status" value="1"/>
</dbReference>
<dbReference type="PANTHER" id="PTHR21349:SF0">
    <property type="entry name" value="LARGE RIBOSOMAL SUBUNIT PROTEIN BL21M"/>
    <property type="match status" value="1"/>
</dbReference>
<dbReference type="Pfam" id="PF00829">
    <property type="entry name" value="Ribosomal_L21p"/>
    <property type="match status" value="1"/>
</dbReference>
<dbReference type="SUPFAM" id="SSF141091">
    <property type="entry name" value="L21p-like"/>
    <property type="match status" value="1"/>
</dbReference>
<dbReference type="PROSITE" id="PS01169">
    <property type="entry name" value="RIBOSOMAL_L21"/>
    <property type="match status" value="1"/>
</dbReference>
<reference key="1">
    <citation type="submission" date="2008-05" db="EMBL/GenBank/DDBJ databases">
        <title>Complete sequence of chromosome 1 of Ralstonia pickettii 12J.</title>
        <authorList>
            <person name="Lucas S."/>
            <person name="Copeland A."/>
            <person name="Lapidus A."/>
            <person name="Glavina del Rio T."/>
            <person name="Dalin E."/>
            <person name="Tice H."/>
            <person name="Bruce D."/>
            <person name="Goodwin L."/>
            <person name="Pitluck S."/>
            <person name="Meincke L."/>
            <person name="Brettin T."/>
            <person name="Detter J.C."/>
            <person name="Han C."/>
            <person name="Kuske C.R."/>
            <person name="Schmutz J."/>
            <person name="Larimer F."/>
            <person name="Land M."/>
            <person name="Hauser L."/>
            <person name="Kyrpides N."/>
            <person name="Mikhailova N."/>
            <person name="Marsh T."/>
            <person name="Richardson P."/>
        </authorList>
    </citation>
    <scope>NUCLEOTIDE SEQUENCE [LARGE SCALE GENOMIC DNA]</scope>
    <source>
        <strain>12J</strain>
    </source>
</reference>
<sequence length="103" mass="11302">MYAVVKTGGKQYKVAAGEKLKVEQIPADVGAEITLDQVLAVGAGDQLKVGAPLVSGAAVKATVISHGRHDKVHIFKMRRRKHYQKRQGHRQNYTELRIDSIVA</sequence>